<reference key="1">
    <citation type="journal article" date="2005" name="J. Mammal.">
        <title>Phylogenetics of the new world rodent family Heteromyidae.</title>
        <authorList>
            <person name="Alexander L.F."/>
            <person name="Riddle B.R."/>
        </authorList>
    </citation>
    <scope>NUCLEOTIDE SEQUENCE [GENOMIC DNA]</scope>
    <source>
        <strain>Isolate LVT 2128</strain>
        <strain>Isolate LVT 3645</strain>
    </source>
</reference>
<gene>
    <name type="primary">MT-CYB</name>
    <name type="synonym">COB</name>
    <name type="synonym">CYTB</name>
    <name type="synonym">MTCYB</name>
</gene>
<dbReference type="EMBL" id="AY926399">
    <property type="protein sequence ID" value="AAY23242.1"/>
    <property type="molecule type" value="Genomic_DNA"/>
</dbReference>
<dbReference type="EMBL" id="AY926400">
    <property type="protein sequence ID" value="AAY23243.1"/>
    <property type="molecule type" value="Genomic_DNA"/>
</dbReference>
<dbReference type="SMR" id="Q508K4"/>
<dbReference type="GO" id="GO:0005743">
    <property type="term" value="C:mitochondrial inner membrane"/>
    <property type="evidence" value="ECO:0007669"/>
    <property type="project" value="UniProtKB-SubCell"/>
</dbReference>
<dbReference type="GO" id="GO:0045275">
    <property type="term" value="C:respiratory chain complex III"/>
    <property type="evidence" value="ECO:0007669"/>
    <property type="project" value="InterPro"/>
</dbReference>
<dbReference type="GO" id="GO:0046872">
    <property type="term" value="F:metal ion binding"/>
    <property type="evidence" value="ECO:0007669"/>
    <property type="project" value="UniProtKB-KW"/>
</dbReference>
<dbReference type="GO" id="GO:0008121">
    <property type="term" value="F:ubiquinol-cytochrome-c reductase activity"/>
    <property type="evidence" value="ECO:0007669"/>
    <property type="project" value="InterPro"/>
</dbReference>
<dbReference type="GO" id="GO:0006122">
    <property type="term" value="P:mitochondrial electron transport, ubiquinol to cytochrome c"/>
    <property type="evidence" value="ECO:0007669"/>
    <property type="project" value="TreeGrafter"/>
</dbReference>
<dbReference type="CDD" id="cd00290">
    <property type="entry name" value="cytochrome_b_C"/>
    <property type="match status" value="1"/>
</dbReference>
<dbReference type="CDD" id="cd00284">
    <property type="entry name" value="Cytochrome_b_N"/>
    <property type="match status" value="1"/>
</dbReference>
<dbReference type="FunFam" id="1.20.810.10:FF:000002">
    <property type="entry name" value="Cytochrome b"/>
    <property type="match status" value="1"/>
</dbReference>
<dbReference type="Gene3D" id="1.20.810.10">
    <property type="entry name" value="Cytochrome Bc1 Complex, Chain C"/>
    <property type="match status" value="1"/>
</dbReference>
<dbReference type="InterPro" id="IPR005798">
    <property type="entry name" value="Cyt_b/b6_C"/>
</dbReference>
<dbReference type="InterPro" id="IPR036150">
    <property type="entry name" value="Cyt_b/b6_C_sf"/>
</dbReference>
<dbReference type="InterPro" id="IPR005797">
    <property type="entry name" value="Cyt_b/b6_N"/>
</dbReference>
<dbReference type="InterPro" id="IPR027387">
    <property type="entry name" value="Cytb/b6-like_sf"/>
</dbReference>
<dbReference type="InterPro" id="IPR030689">
    <property type="entry name" value="Cytochrome_b"/>
</dbReference>
<dbReference type="InterPro" id="IPR048260">
    <property type="entry name" value="Cytochrome_b_C_euk/bac"/>
</dbReference>
<dbReference type="InterPro" id="IPR048259">
    <property type="entry name" value="Cytochrome_b_N_euk/bac"/>
</dbReference>
<dbReference type="InterPro" id="IPR016174">
    <property type="entry name" value="Di-haem_cyt_TM"/>
</dbReference>
<dbReference type="PANTHER" id="PTHR19271">
    <property type="entry name" value="CYTOCHROME B"/>
    <property type="match status" value="1"/>
</dbReference>
<dbReference type="PANTHER" id="PTHR19271:SF16">
    <property type="entry name" value="CYTOCHROME B"/>
    <property type="match status" value="1"/>
</dbReference>
<dbReference type="Pfam" id="PF00032">
    <property type="entry name" value="Cytochrom_B_C"/>
    <property type="match status" value="1"/>
</dbReference>
<dbReference type="Pfam" id="PF00033">
    <property type="entry name" value="Cytochrome_B"/>
    <property type="match status" value="1"/>
</dbReference>
<dbReference type="PIRSF" id="PIRSF038885">
    <property type="entry name" value="COB"/>
    <property type="match status" value="1"/>
</dbReference>
<dbReference type="SUPFAM" id="SSF81648">
    <property type="entry name" value="a domain/subunit of cytochrome bc1 complex (Ubiquinol-cytochrome c reductase)"/>
    <property type="match status" value="1"/>
</dbReference>
<dbReference type="SUPFAM" id="SSF81342">
    <property type="entry name" value="Transmembrane di-heme cytochromes"/>
    <property type="match status" value="1"/>
</dbReference>
<dbReference type="PROSITE" id="PS51003">
    <property type="entry name" value="CYTB_CTER"/>
    <property type="match status" value="1"/>
</dbReference>
<dbReference type="PROSITE" id="PS51002">
    <property type="entry name" value="CYTB_NTER"/>
    <property type="match status" value="1"/>
</dbReference>
<proteinExistence type="inferred from homology"/>
<feature type="chain" id="PRO_0000254994" description="Cytochrome b">
    <location>
        <begin position="1"/>
        <end position="379"/>
    </location>
</feature>
<feature type="transmembrane region" description="Helical" evidence="2">
    <location>
        <begin position="33"/>
        <end position="53"/>
    </location>
</feature>
<feature type="transmembrane region" description="Helical" evidence="2">
    <location>
        <begin position="77"/>
        <end position="98"/>
    </location>
</feature>
<feature type="transmembrane region" description="Helical" evidence="2">
    <location>
        <begin position="113"/>
        <end position="133"/>
    </location>
</feature>
<feature type="transmembrane region" description="Helical" evidence="2">
    <location>
        <begin position="178"/>
        <end position="198"/>
    </location>
</feature>
<feature type="transmembrane region" description="Helical" evidence="2">
    <location>
        <begin position="226"/>
        <end position="246"/>
    </location>
</feature>
<feature type="transmembrane region" description="Helical" evidence="2">
    <location>
        <begin position="288"/>
        <end position="308"/>
    </location>
</feature>
<feature type="transmembrane region" description="Helical" evidence="2">
    <location>
        <begin position="320"/>
        <end position="340"/>
    </location>
</feature>
<feature type="transmembrane region" description="Helical" evidence="2">
    <location>
        <begin position="347"/>
        <end position="367"/>
    </location>
</feature>
<feature type="binding site" description="axial binding residue" evidence="2">
    <location>
        <position position="83"/>
    </location>
    <ligand>
        <name>heme b</name>
        <dbReference type="ChEBI" id="CHEBI:60344"/>
        <label>b562</label>
    </ligand>
    <ligandPart>
        <name>Fe</name>
        <dbReference type="ChEBI" id="CHEBI:18248"/>
    </ligandPart>
</feature>
<feature type="binding site" description="axial binding residue" evidence="2">
    <location>
        <position position="97"/>
    </location>
    <ligand>
        <name>heme b</name>
        <dbReference type="ChEBI" id="CHEBI:60344"/>
        <label>b566</label>
    </ligand>
    <ligandPart>
        <name>Fe</name>
        <dbReference type="ChEBI" id="CHEBI:18248"/>
    </ligandPart>
</feature>
<feature type="binding site" description="axial binding residue" evidence="2">
    <location>
        <position position="182"/>
    </location>
    <ligand>
        <name>heme b</name>
        <dbReference type="ChEBI" id="CHEBI:60344"/>
        <label>b562</label>
    </ligand>
    <ligandPart>
        <name>Fe</name>
        <dbReference type="ChEBI" id="CHEBI:18248"/>
    </ligandPart>
</feature>
<feature type="binding site" description="axial binding residue" evidence="2">
    <location>
        <position position="196"/>
    </location>
    <ligand>
        <name>heme b</name>
        <dbReference type="ChEBI" id="CHEBI:60344"/>
        <label>b566</label>
    </ligand>
    <ligandPart>
        <name>Fe</name>
        <dbReference type="ChEBI" id="CHEBI:18248"/>
    </ligandPart>
</feature>
<feature type="binding site" evidence="2">
    <location>
        <position position="201"/>
    </location>
    <ligand>
        <name>a ubiquinone</name>
        <dbReference type="ChEBI" id="CHEBI:16389"/>
    </ligand>
</feature>
<feature type="sequence variant" description="In strain: Isolate LVT 3645.">
    <original>T</original>
    <variation>A</variation>
    <location>
        <position position="23"/>
    </location>
</feature>
<feature type="sequence variant" description="In strain: Isolate LVT 3645.">
    <original>I</original>
    <variation>M</variation>
    <location>
        <position position="60"/>
    </location>
</feature>
<feature type="sequence variant" description="In strain: Isolate LVT 3645.">
    <original>M</original>
    <variation>I</variation>
    <location>
        <position position="118"/>
    </location>
</feature>
<feature type="sequence variant" description="In strain: Isolate LVT 3645.">
    <original>T</original>
    <variation>S</variation>
    <location>
        <position position="159"/>
    </location>
</feature>
<feature type="sequence variant" description="In strain: Isolate LVT 3645.">
    <original>F</original>
    <variation>L</variation>
    <location>
        <position position="226"/>
    </location>
</feature>
<feature type="sequence variant" description="In strain: Isolate LVT 3645.">
    <original>S</original>
    <variation>T</variation>
    <location>
        <position position="241"/>
    </location>
</feature>
<feature type="sequence variant" description="In strain: Isolate LVT 3645.">
    <original>V</original>
    <variation>I</variation>
    <location>
        <position position="295"/>
    </location>
</feature>
<feature type="sequence variant" description="In strain: Isolate LVT 3645.">
    <original>F</original>
    <variation>L</variation>
    <location>
        <position position="333"/>
    </location>
</feature>
<feature type="sequence variant" description="In strain: Isolate LVT 3645.">
    <original>V</original>
    <variation>I</variation>
    <location>
        <position position="353"/>
    </location>
</feature>
<feature type="sequence variant" description="In strain: Isolate LVT 3645.">
    <original>F</original>
    <variation>L</variation>
    <location>
        <position position="365"/>
    </location>
</feature>
<feature type="sequence variant" description="In strain: Isolate LVT 3645.">
    <original>I</original>
    <variation>V</variation>
    <location>
        <position position="368"/>
    </location>
</feature>
<feature type="sequence variant" description="In strain: Isolate LVT 3645.">
    <original>V</original>
    <variation>I</variation>
    <location>
        <position position="376"/>
    </location>
</feature>
<protein>
    <recommendedName>
        <fullName>Cytochrome b</fullName>
    </recommendedName>
    <alternativeName>
        <fullName>Complex III subunit 3</fullName>
    </alternativeName>
    <alternativeName>
        <fullName>Complex III subunit III</fullName>
    </alternativeName>
    <alternativeName>
        <fullName>Cytochrome b-c1 complex subunit 3</fullName>
    </alternativeName>
    <alternativeName>
        <fullName>Ubiquinol-cytochrome-c reductase complex cytochrome b subunit</fullName>
    </alternativeName>
</protein>
<sequence length="379" mass="42753">MTILRKSHPLMKMVNHAFIDLPTPSNISGWWNFGSLLGLCLIIQIASGLFLAMHYTSDTITAFSSVAHICRDVNYGWLIRYIHANGASLFFICLYLHIGRGIYYGSYMYKETWNIGIMLLFLTMATAFMGYVLPWGQMSFWGATVITNLLSAIPYVGSTLVEWIWGGFSVDKATLTRFFAFHFILPFIIAATAMVHLLFLHETGSNNPLGIPSDSDKIPFHPYYTFKDLLGVIIILASFLSFVLFFPDLLGDPDNYSPANPLNTPPHIKPEWYFLFAYAILRSIPNKLGGVIALVLSILVLALFPLLHTANQRSMMFRPISQFLFWTLVSDLFILTWIGGQPVEPPFIIIGQVASILYFSIILVFLPIAGLIENKVLKW</sequence>
<keyword id="KW-0249">Electron transport</keyword>
<keyword id="KW-0349">Heme</keyword>
<keyword id="KW-0408">Iron</keyword>
<keyword id="KW-0472">Membrane</keyword>
<keyword id="KW-0479">Metal-binding</keyword>
<keyword id="KW-0496">Mitochondrion</keyword>
<keyword id="KW-0999">Mitochondrion inner membrane</keyword>
<keyword id="KW-0679">Respiratory chain</keyword>
<keyword id="KW-0812">Transmembrane</keyword>
<keyword id="KW-1133">Transmembrane helix</keyword>
<keyword id="KW-0813">Transport</keyword>
<keyword id="KW-0830">Ubiquinone</keyword>
<geneLocation type="mitochondrion"/>
<accession>Q508K4</accession>
<accession>Q508K3</accession>
<evidence type="ECO:0000250" key="1"/>
<evidence type="ECO:0000250" key="2">
    <source>
        <dbReference type="UniProtKB" id="P00157"/>
    </source>
</evidence>
<evidence type="ECO:0000255" key="3">
    <source>
        <dbReference type="PROSITE-ProRule" id="PRU00967"/>
    </source>
</evidence>
<evidence type="ECO:0000255" key="4">
    <source>
        <dbReference type="PROSITE-ProRule" id="PRU00968"/>
    </source>
</evidence>
<organism>
    <name type="scientific">Chaetodipus arenarius</name>
    <name type="common">Little desert pocket mouse</name>
    <name type="synonym">Perognathus arenarius</name>
    <dbReference type="NCBI Taxonomy" id="142641"/>
    <lineage>
        <taxon>Eukaryota</taxon>
        <taxon>Metazoa</taxon>
        <taxon>Chordata</taxon>
        <taxon>Craniata</taxon>
        <taxon>Vertebrata</taxon>
        <taxon>Euteleostomi</taxon>
        <taxon>Mammalia</taxon>
        <taxon>Eutheria</taxon>
        <taxon>Euarchontoglires</taxon>
        <taxon>Glires</taxon>
        <taxon>Rodentia</taxon>
        <taxon>Castorimorpha</taxon>
        <taxon>Heteromyidae</taxon>
        <taxon>Perognathinae</taxon>
        <taxon>Chaetodipus</taxon>
    </lineage>
</organism>
<comment type="function">
    <text evidence="2">Component of the ubiquinol-cytochrome c reductase complex (complex III or cytochrome b-c1 complex) that is part of the mitochondrial respiratory chain. The b-c1 complex mediates electron transfer from ubiquinol to cytochrome c. Contributes to the generation of a proton gradient across the mitochondrial membrane that is then used for ATP synthesis.</text>
</comment>
<comment type="cofactor">
    <cofactor evidence="2">
        <name>heme b</name>
        <dbReference type="ChEBI" id="CHEBI:60344"/>
    </cofactor>
    <text evidence="2">Binds 2 heme b groups non-covalently.</text>
</comment>
<comment type="subunit">
    <text evidence="2">The cytochrome bc1 complex contains 11 subunits: 3 respiratory subunits (MT-CYB, CYC1 and UQCRFS1), 2 core proteins (UQCRC1 and UQCRC2) and 6 low-molecular weight proteins (UQCRH/QCR6, UQCRB/QCR7, UQCRQ/QCR8, UQCR10/QCR9, UQCR11/QCR10 and a cleavage product of UQCRFS1). This cytochrome bc1 complex then forms a dimer.</text>
</comment>
<comment type="subcellular location">
    <subcellularLocation>
        <location evidence="2">Mitochondrion inner membrane</location>
        <topology evidence="2">Multi-pass membrane protein</topology>
    </subcellularLocation>
</comment>
<comment type="miscellaneous">
    <text evidence="1">Heme 1 (or BL or b562) is low-potential and absorbs at about 562 nm, and heme 2 (or BH or b566) is high-potential and absorbs at about 566 nm.</text>
</comment>
<comment type="similarity">
    <text evidence="3 4">Belongs to the cytochrome b family.</text>
</comment>
<comment type="caution">
    <text evidence="2">The full-length protein contains only eight transmembrane helices, not nine as predicted by bioinformatics tools.</text>
</comment>
<name>CYB_CHAAB</name>